<keyword id="KW-1003">Cell membrane</keyword>
<keyword id="KW-0472">Membrane</keyword>
<keyword id="KW-1185">Reference proteome</keyword>
<comment type="subcellular location">
    <subcellularLocation>
        <location evidence="1">Cell membrane</location>
    </subcellularLocation>
</comment>
<comment type="similarity">
    <text evidence="2">Belongs to the mycobacterial PPE family.</text>
</comment>
<reference key="1">
    <citation type="journal article" date="2002" name="J. Bacteriol.">
        <title>Whole-genome comparison of Mycobacterium tuberculosis clinical and laboratory strains.</title>
        <authorList>
            <person name="Fleischmann R.D."/>
            <person name="Alland D."/>
            <person name="Eisen J.A."/>
            <person name="Carpenter L."/>
            <person name="White O."/>
            <person name="Peterson J.D."/>
            <person name="DeBoy R.T."/>
            <person name="Dodson R.J."/>
            <person name="Gwinn M.L."/>
            <person name="Haft D.H."/>
            <person name="Hickey E.K."/>
            <person name="Kolonay J.F."/>
            <person name="Nelson W.C."/>
            <person name="Umayam L.A."/>
            <person name="Ermolaeva M.D."/>
            <person name="Salzberg S.L."/>
            <person name="Delcher A."/>
            <person name="Utterback T.R."/>
            <person name="Weidman J.F."/>
            <person name="Khouri H.M."/>
            <person name="Gill J."/>
            <person name="Mikula A."/>
            <person name="Bishai W."/>
            <person name="Jacobs W.R. Jr."/>
            <person name="Venter J.C."/>
            <person name="Fraser C.M."/>
        </authorList>
    </citation>
    <scope>NUCLEOTIDE SEQUENCE [LARGE SCALE GENOMIC DNA]</scope>
    <source>
        <strain>CDC 1551 / Oshkosh</strain>
    </source>
</reference>
<name>PPE36_MYCTO</name>
<accession>P9WI00</accession>
<accession>L0TA84</accession>
<accession>P95315</accession>
<accession>Q79FH5</accession>
<accession>Q7D7I4</accession>
<proteinExistence type="inferred from homology"/>
<sequence>MPNFWALPPEINSTRIYLGPGSGPILAAAQGWNALASELEKTKVGLQSALDTLLESYRGQSSQALIQQTLPYVQWLTTTAEHAHKTAIQLTAAANAYEQARAAMVPPAMVRANRVQTTVLKAINWFGQFSTRIADKEADYEQMWFQDALVMENYWEAVQEAIQSTSHFEDPPEMADDYDEAWMLNTVFDYHNENAKEEVIHLVPDVNKERGPIELVTKVDKEGTIRLVYDGEPTFSYKEHPKF</sequence>
<dbReference type="EMBL" id="AE000516">
    <property type="protein sequence ID" value="AAK46450.1"/>
    <property type="molecule type" value="Genomic_DNA"/>
</dbReference>
<dbReference type="PIR" id="G70511">
    <property type="entry name" value="G70511"/>
</dbReference>
<dbReference type="RefSeq" id="WP_003900467.1">
    <property type="nucleotide sequence ID" value="NZ_KK341227.1"/>
</dbReference>
<dbReference type="SMR" id="P9WI00"/>
<dbReference type="KEGG" id="mtc:MT2167"/>
<dbReference type="PATRIC" id="fig|83331.31.peg.2337"/>
<dbReference type="HOGENOM" id="CLU_000243_10_0_11"/>
<dbReference type="Proteomes" id="UP000001020">
    <property type="component" value="Chromosome"/>
</dbReference>
<dbReference type="GO" id="GO:0005886">
    <property type="term" value="C:plasma membrane"/>
    <property type="evidence" value="ECO:0007669"/>
    <property type="project" value="UniProtKB-SubCell"/>
</dbReference>
<dbReference type="GO" id="GO:0052572">
    <property type="term" value="P:response to host immune response"/>
    <property type="evidence" value="ECO:0007669"/>
    <property type="project" value="TreeGrafter"/>
</dbReference>
<dbReference type="Gene3D" id="1.20.1260.20">
    <property type="entry name" value="PPE superfamily"/>
    <property type="match status" value="1"/>
</dbReference>
<dbReference type="InterPro" id="IPR000030">
    <property type="entry name" value="PPE_dom"/>
</dbReference>
<dbReference type="InterPro" id="IPR038332">
    <property type="entry name" value="PPE_sf"/>
</dbReference>
<dbReference type="PANTHER" id="PTHR46766">
    <property type="entry name" value="GLUTAMINE-RICH PROTEIN 2"/>
    <property type="match status" value="1"/>
</dbReference>
<dbReference type="PANTHER" id="PTHR46766:SF1">
    <property type="entry name" value="GLUTAMINE-RICH PROTEIN 2"/>
    <property type="match status" value="1"/>
</dbReference>
<dbReference type="Pfam" id="PF00823">
    <property type="entry name" value="PPE"/>
    <property type="match status" value="1"/>
</dbReference>
<dbReference type="SUPFAM" id="SSF140459">
    <property type="entry name" value="PE/PPE dimer-like"/>
    <property type="match status" value="1"/>
</dbReference>
<organism>
    <name type="scientific">Mycobacterium tuberculosis (strain CDC 1551 / Oshkosh)</name>
    <dbReference type="NCBI Taxonomy" id="83331"/>
    <lineage>
        <taxon>Bacteria</taxon>
        <taxon>Bacillati</taxon>
        <taxon>Actinomycetota</taxon>
        <taxon>Actinomycetes</taxon>
        <taxon>Mycobacteriales</taxon>
        <taxon>Mycobacteriaceae</taxon>
        <taxon>Mycobacterium</taxon>
        <taxon>Mycobacterium tuberculosis complex</taxon>
    </lineage>
</organism>
<gene>
    <name type="primary">PPE36</name>
    <name type="synonym">p27</name>
    <name type="ordered locus">MT2167</name>
</gene>
<feature type="chain" id="PRO_0000428093" description="Uncharacterized PPE family protein PPE36">
    <location>
        <begin position="1"/>
        <end position="243"/>
    </location>
</feature>
<protein>
    <recommendedName>
        <fullName>Uncharacterized PPE family protein PPE36</fullName>
    </recommendedName>
</protein>
<evidence type="ECO:0000250" key="1"/>
<evidence type="ECO:0000305" key="2"/>